<accession>Q5E3E3</accession>
<protein>
    <recommendedName>
        <fullName evidence="1">Ditrans,polycis-undecaprenyl-diphosphate synthase ((2E,6E)-farnesyl-diphosphate specific)</fullName>
        <ecNumber evidence="1">2.5.1.31</ecNumber>
    </recommendedName>
    <alternativeName>
        <fullName evidence="1">Ditrans,polycis-undecaprenylcistransferase</fullName>
    </alternativeName>
    <alternativeName>
        <fullName evidence="1">Undecaprenyl diphosphate synthase</fullName>
        <shortName evidence="1">UDS</shortName>
    </alternativeName>
    <alternativeName>
        <fullName evidence="1">Undecaprenyl pyrophosphate synthase</fullName>
        <shortName evidence="1">UPP synthase</shortName>
    </alternativeName>
</protein>
<gene>
    <name evidence="1" type="primary">uppS</name>
    <name type="ordered locus">VF_1958</name>
</gene>
<feature type="chain" id="PRO_0000123712" description="Ditrans,polycis-undecaprenyl-diphosphate synthase ((2E,6E)-farnesyl-diphosphate specific)">
    <location>
        <begin position="1"/>
        <end position="257"/>
    </location>
</feature>
<feature type="active site" evidence="1">
    <location>
        <position position="24"/>
    </location>
</feature>
<feature type="active site" description="Proton acceptor" evidence="1">
    <location>
        <position position="72"/>
    </location>
</feature>
<feature type="binding site" evidence="1">
    <location>
        <position position="24"/>
    </location>
    <ligand>
        <name>Mg(2+)</name>
        <dbReference type="ChEBI" id="CHEBI:18420"/>
    </ligand>
</feature>
<feature type="binding site" evidence="1">
    <location>
        <begin position="25"/>
        <end position="28"/>
    </location>
    <ligand>
        <name>substrate</name>
    </ligand>
</feature>
<feature type="binding site" evidence="1">
    <location>
        <position position="29"/>
    </location>
    <ligand>
        <name>substrate</name>
    </ligand>
</feature>
<feature type="binding site" evidence="1">
    <location>
        <position position="37"/>
    </location>
    <ligand>
        <name>substrate</name>
    </ligand>
</feature>
<feature type="binding site" evidence="1">
    <location>
        <position position="41"/>
    </location>
    <ligand>
        <name>substrate</name>
    </ligand>
</feature>
<feature type="binding site" evidence="1">
    <location>
        <begin position="69"/>
        <end position="71"/>
    </location>
    <ligand>
        <name>substrate</name>
    </ligand>
</feature>
<feature type="binding site" evidence="1">
    <location>
        <position position="73"/>
    </location>
    <ligand>
        <name>substrate</name>
    </ligand>
</feature>
<feature type="binding site" evidence="1">
    <location>
        <position position="75"/>
    </location>
    <ligand>
        <name>substrate</name>
    </ligand>
</feature>
<feature type="binding site" evidence="1">
    <location>
        <position position="192"/>
    </location>
    <ligand>
        <name>substrate</name>
    </ligand>
</feature>
<feature type="binding site" evidence="1">
    <location>
        <begin position="198"/>
        <end position="200"/>
    </location>
    <ligand>
        <name>substrate</name>
    </ligand>
</feature>
<feature type="binding site" evidence="1">
    <location>
        <position position="211"/>
    </location>
    <ligand>
        <name>Mg(2+)</name>
        <dbReference type="ChEBI" id="CHEBI:18420"/>
    </ligand>
</feature>
<evidence type="ECO:0000255" key="1">
    <source>
        <dbReference type="HAMAP-Rule" id="MF_01139"/>
    </source>
</evidence>
<dbReference type="EC" id="2.5.1.31" evidence="1"/>
<dbReference type="EMBL" id="CP000020">
    <property type="protein sequence ID" value="AAW86453.1"/>
    <property type="molecule type" value="Genomic_DNA"/>
</dbReference>
<dbReference type="RefSeq" id="WP_005420551.1">
    <property type="nucleotide sequence ID" value="NC_006840.2"/>
</dbReference>
<dbReference type="RefSeq" id="YP_205341.1">
    <property type="nucleotide sequence ID" value="NC_006840.2"/>
</dbReference>
<dbReference type="SMR" id="Q5E3E3"/>
<dbReference type="STRING" id="312309.VF_1958"/>
<dbReference type="EnsemblBacteria" id="AAW86453">
    <property type="protein sequence ID" value="AAW86453"/>
    <property type="gene ID" value="VF_1958"/>
</dbReference>
<dbReference type="GeneID" id="54164654"/>
<dbReference type="KEGG" id="vfi:VF_1958"/>
<dbReference type="PATRIC" id="fig|312309.11.peg.1985"/>
<dbReference type="eggNOG" id="COG0020">
    <property type="taxonomic scope" value="Bacteria"/>
</dbReference>
<dbReference type="HOGENOM" id="CLU_038505_1_1_6"/>
<dbReference type="OrthoDB" id="4191603at2"/>
<dbReference type="Proteomes" id="UP000000537">
    <property type="component" value="Chromosome I"/>
</dbReference>
<dbReference type="GO" id="GO:0005829">
    <property type="term" value="C:cytosol"/>
    <property type="evidence" value="ECO:0007669"/>
    <property type="project" value="TreeGrafter"/>
</dbReference>
<dbReference type="GO" id="GO:0008834">
    <property type="term" value="F:ditrans,polycis-undecaprenyl-diphosphate synthase [(2E,6E)-farnesyl-diphosphate specific] activity"/>
    <property type="evidence" value="ECO:0007669"/>
    <property type="project" value="UniProtKB-UniRule"/>
</dbReference>
<dbReference type="GO" id="GO:0000287">
    <property type="term" value="F:magnesium ion binding"/>
    <property type="evidence" value="ECO:0007669"/>
    <property type="project" value="UniProtKB-UniRule"/>
</dbReference>
<dbReference type="GO" id="GO:0071555">
    <property type="term" value="P:cell wall organization"/>
    <property type="evidence" value="ECO:0007669"/>
    <property type="project" value="UniProtKB-KW"/>
</dbReference>
<dbReference type="GO" id="GO:0009252">
    <property type="term" value="P:peptidoglycan biosynthetic process"/>
    <property type="evidence" value="ECO:0007669"/>
    <property type="project" value="UniProtKB-UniRule"/>
</dbReference>
<dbReference type="GO" id="GO:0016094">
    <property type="term" value="P:polyprenol biosynthetic process"/>
    <property type="evidence" value="ECO:0007669"/>
    <property type="project" value="TreeGrafter"/>
</dbReference>
<dbReference type="GO" id="GO:0008360">
    <property type="term" value="P:regulation of cell shape"/>
    <property type="evidence" value="ECO:0007669"/>
    <property type="project" value="UniProtKB-KW"/>
</dbReference>
<dbReference type="CDD" id="cd00475">
    <property type="entry name" value="Cis_IPPS"/>
    <property type="match status" value="1"/>
</dbReference>
<dbReference type="FunFam" id="3.40.1180.10:FF:000001">
    <property type="entry name" value="(2E,6E)-farnesyl-diphosphate-specific ditrans,polycis-undecaprenyl-diphosphate synthase"/>
    <property type="match status" value="1"/>
</dbReference>
<dbReference type="Gene3D" id="3.40.1180.10">
    <property type="entry name" value="Decaprenyl diphosphate synthase-like"/>
    <property type="match status" value="1"/>
</dbReference>
<dbReference type="HAMAP" id="MF_01139">
    <property type="entry name" value="ISPT"/>
    <property type="match status" value="1"/>
</dbReference>
<dbReference type="InterPro" id="IPR001441">
    <property type="entry name" value="UPP_synth-like"/>
</dbReference>
<dbReference type="InterPro" id="IPR018520">
    <property type="entry name" value="UPP_synth-like_CS"/>
</dbReference>
<dbReference type="InterPro" id="IPR036424">
    <property type="entry name" value="UPP_synth-like_sf"/>
</dbReference>
<dbReference type="NCBIfam" id="NF011405">
    <property type="entry name" value="PRK14830.1"/>
    <property type="match status" value="1"/>
</dbReference>
<dbReference type="NCBIfam" id="TIGR00055">
    <property type="entry name" value="uppS"/>
    <property type="match status" value="1"/>
</dbReference>
<dbReference type="PANTHER" id="PTHR10291:SF0">
    <property type="entry name" value="DEHYDRODOLICHYL DIPHOSPHATE SYNTHASE 2"/>
    <property type="match status" value="1"/>
</dbReference>
<dbReference type="PANTHER" id="PTHR10291">
    <property type="entry name" value="DEHYDRODOLICHYL DIPHOSPHATE SYNTHASE FAMILY MEMBER"/>
    <property type="match status" value="1"/>
</dbReference>
<dbReference type="Pfam" id="PF01255">
    <property type="entry name" value="Prenyltransf"/>
    <property type="match status" value="1"/>
</dbReference>
<dbReference type="SUPFAM" id="SSF64005">
    <property type="entry name" value="Undecaprenyl diphosphate synthase"/>
    <property type="match status" value="1"/>
</dbReference>
<dbReference type="PROSITE" id="PS01066">
    <property type="entry name" value="UPP_SYNTHASE"/>
    <property type="match status" value="1"/>
</dbReference>
<name>UPPS_ALIF1</name>
<reference key="1">
    <citation type="journal article" date="2005" name="Proc. Natl. Acad. Sci. U.S.A.">
        <title>Complete genome sequence of Vibrio fischeri: a symbiotic bacterium with pathogenic congeners.</title>
        <authorList>
            <person name="Ruby E.G."/>
            <person name="Urbanowski M."/>
            <person name="Campbell J."/>
            <person name="Dunn A."/>
            <person name="Faini M."/>
            <person name="Gunsalus R."/>
            <person name="Lostroh P."/>
            <person name="Lupp C."/>
            <person name="McCann J."/>
            <person name="Millikan D."/>
            <person name="Schaefer A."/>
            <person name="Stabb E."/>
            <person name="Stevens A."/>
            <person name="Visick K."/>
            <person name="Whistler C."/>
            <person name="Greenberg E.P."/>
        </authorList>
    </citation>
    <scope>NUCLEOTIDE SEQUENCE [LARGE SCALE GENOMIC DNA]</scope>
    <source>
        <strain>ATCC 700601 / ES114</strain>
    </source>
</reference>
<comment type="function">
    <text evidence="1">Catalyzes the sequential condensation of isopentenyl diphosphate (IPP) with (2E,6E)-farnesyl diphosphate (E,E-FPP) to yield (2Z,6Z,10Z,14Z,18Z,22Z,26Z,30Z,34E,38E)-undecaprenyl diphosphate (di-trans,octa-cis-UPP). UPP is the precursor of glycosyl carrier lipid in the biosynthesis of bacterial cell wall polysaccharide components such as peptidoglycan and lipopolysaccharide.</text>
</comment>
<comment type="catalytic activity">
    <reaction evidence="1">
        <text>8 isopentenyl diphosphate + (2E,6E)-farnesyl diphosphate = di-trans,octa-cis-undecaprenyl diphosphate + 8 diphosphate</text>
        <dbReference type="Rhea" id="RHEA:27551"/>
        <dbReference type="ChEBI" id="CHEBI:33019"/>
        <dbReference type="ChEBI" id="CHEBI:58405"/>
        <dbReference type="ChEBI" id="CHEBI:128769"/>
        <dbReference type="ChEBI" id="CHEBI:175763"/>
        <dbReference type="EC" id="2.5.1.31"/>
    </reaction>
</comment>
<comment type="cofactor">
    <cofactor evidence="1">
        <name>Mg(2+)</name>
        <dbReference type="ChEBI" id="CHEBI:18420"/>
    </cofactor>
    <text evidence="1">Binds 2 magnesium ions per subunit.</text>
</comment>
<comment type="subunit">
    <text evidence="1">Homodimer.</text>
</comment>
<comment type="similarity">
    <text evidence="1">Belongs to the UPP synthase family.</text>
</comment>
<keyword id="KW-0133">Cell shape</keyword>
<keyword id="KW-0961">Cell wall biogenesis/degradation</keyword>
<keyword id="KW-0460">Magnesium</keyword>
<keyword id="KW-0479">Metal-binding</keyword>
<keyword id="KW-0573">Peptidoglycan synthesis</keyword>
<keyword id="KW-1185">Reference proteome</keyword>
<keyword id="KW-0808">Transferase</keyword>
<sequence>MTSQINNEFLSLDVLPKHIAVIMDGNGRWAKAQGKPRVFGHKAGVDAVRKTISAASKLGINAITLFAFSSENWRRPEEEVSVLMELFITVLSREVKRLHKNNIQLRIIGETSQFSSRLQKKIVEAETLTSENTGLVLNVAANYGGKWDITQAVRRLAYQVERGNLQADDIDEDLIASKLTMSDLPEVDLMIRTSGECRISNFMLWQMAYAEFYFTDQYWPDFNEQSLADAVAWFVSRERRFGCTGEQIQALMNEKDQ</sequence>
<organism>
    <name type="scientific">Aliivibrio fischeri (strain ATCC 700601 / ES114)</name>
    <name type="common">Vibrio fischeri</name>
    <dbReference type="NCBI Taxonomy" id="312309"/>
    <lineage>
        <taxon>Bacteria</taxon>
        <taxon>Pseudomonadati</taxon>
        <taxon>Pseudomonadota</taxon>
        <taxon>Gammaproteobacteria</taxon>
        <taxon>Vibrionales</taxon>
        <taxon>Vibrionaceae</taxon>
        <taxon>Aliivibrio</taxon>
    </lineage>
</organism>
<proteinExistence type="inferred from homology"/>